<comment type="function">
    <text evidence="2">ppGpp hydrolyzing enzyme involved in starvation response.</text>
</comment>
<comment type="catalytic activity">
    <reaction evidence="2">
        <text>guanosine 3',5'-bis(diphosphate) + H2O = GDP + diphosphate + H(+)</text>
        <dbReference type="Rhea" id="RHEA:14253"/>
        <dbReference type="ChEBI" id="CHEBI:15377"/>
        <dbReference type="ChEBI" id="CHEBI:15378"/>
        <dbReference type="ChEBI" id="CHEBI:33019"/>
        <dbReference type="ChEBI" id="CHEBI:58189"/>
        <dbReference type="ChEBI" id="CHEBI:77828"/>
        <dbReference type="EC" id="3.1.7.2"/>
    </reaction>
</comment>
<comment type="cofactor">
    <cofactor evidence="2">
        <name>Mn(2+)</name>
        <dbReference type="ChEBI" id="CHEBI:29035"/>
    </cofactor>
</comment>
<comment type="disruption phenotype">
    <text evidence="2">Induces retarded body growth and impaired starvation resistance. Mutants have highly down-regulated DNA and protein synthesis-related genes and up-regulated stress-responsible genes.</text>
</comment>
<comment type="similarity">
    <text evidence="3">Belongs to the MESH1 family.</text>
</comment>
<reference key="1">
    <citation type="journal article" date="2000" name="Science">
        <title>The genome sequence of Drosophila melanogaster.</title>
        <authorList>
            <person name="Adams M.D."/>
            <person name="Celniker S.E."/>
            <person name="Holt R.A."/>
            <person name="Evans C.A."/>
            <person name="Gocayne J.D."/>
            <person name="Amanatides P.G."/>
            <person name="Scherer S.E."/>
            <person name="Li P.W."/>
            <person name="Hoskins R.A."/>
            <person name="Galle R.F."/>
            <person name="George R.A."/>
            <person name="Lewis S.E."/>
            <person name="Richards S."/>
            <person name="Ashburner M."/>
            <person name="Henderson S.N."/>
            <person name="Sutton G.G."/>
            <person name="Wortman J.R."/>
            <person name="Yandell M.D."/>
            <person name="Zhang Q."/>
            <person name="Chen L.X."/>
            <person name="Brandon R.C."/>
            <person name="Rogers Y.-H.C."/>
            <person name="Blazej R.G."/>
            <person name="Champe M."/>
            <person name="Pfeiffer B.D."/>
            <person name="Wan K.H."/>
            <person name="Doyle C."/>
            <person name="Baxter E.G."/>
            <person name="Helt G."/>
            <person name="Nelson C.R."/>
            <person name="Miklos G.L.G."/>
            <person name="Abril J.F."/>
            <person name="Agbayani A."/>
            <person name="An H.-J."/>
            <person name="Andrews-Pfannkoch C."/>
            <person name="Baldwin D."/>
            <person name="Ballew R.M."/>
            <person name="Basu A."/>
            <person name="Baxendale J."/>
            <person name="Bayraktaroglu L."/>
            <person name="Beasley E.M."/>
            <person name="Beeson K.Y."/>
            <person name="Benos P.V."/>
            <person name="Berman B.P."/>
            <person name="Bhandari D."/>
            <person name="Bolshakov S."/>
            <person name="Borkova D."/>
            <person name="Botchan M.R."/>
            <person name="Bouck J."/>
            <person name="Brokstein P."/>
            <person name="Brottier P."/>
            <person name="Burtis K.C."/>
            <person name="Busam D.A."/>
            <person name="Butler H."/>
            <person name="Cadieu E."/>
            <person name="Center A."/>
            <person name="Chandra I."/>
            <person name="Cherry J.M."/>
            <person name="Cawley S."/>
            <person name="Dahlke C."/>
            <person name="Davenport L.B."/>
            <person name="Davies P."/>
            <person name="de Pablos B."/>
            <person name="Delcher A."/>
            <person name="Deng Z."/>
            <person name="Mays A.D."/>
            <person name="Dew I."/>
            <person name="Dietz S.M."/>
            <person name="Dodson K."/>
            <person name="Doup L.E."/>
            <person name="Downes M."/>
            <person name="Dugan-Rocha S."/>
            <person name="Dunkov B.C."/>
            <person name="Dunn P."/>
            <person name="Durbin K.J."/>
            <person name="Evangelista C.C."/>
            <person name="Ferraz C."/>
            <person name="Ferriera S."/>
            <person name="Fleischmann W."/>
            <person name="Fosler C."/>
            <person name="Gabrielian A.E."/>
            <person name="Garg N.S."/>
            <person name="Gelbart W.M."/>
            <person name="Glasser K."/>
            <person name="Glodek A."/>
            <person name="Gong F."/>
            <person name="Gorrell J.H."/>
            <person name="Gu Z."/>
            <person name="Guan P."/>
            <person name="Harris M."/>
            <person name="Harris N.L."/>
            <person name="Harvey D.A."/>
            <person name="Heiman T.J."/>
            <person name="Hernandez J.R."/>
            <person name="Houck J."/>
            <person name="Hostin D."/>
            <person name="Houston K.A."/>
            <person name="Howland T.J."/>
            <person name="Wei M.-H."/>
            <person name="Ibegwam C."/>
            <person name="Jalali M."/>
            <person name="Kalush F."/>
            <person name="Karpen G.H."/>
            <person name="Ke Z."/>
            <person name="Kennison J.A."/>
            <person name="Ketchum K.A."/>
            <person name="Kimmel B.E."/>
            <person name="Kodira C.D."/>
            <person name="Kraft C.L."/>
            <person name="Kravitz S."/>
            <person name="Kulp D."/>
            <person name="Lai Z."/>
            <person name="Lasko P."/>
            <person name="Lei Y."/>
            <person name="Levitsky A.A."/>
            <person name="Li J.H."/>
            <person name="Li Z."/>
            <person name="Liang Y."/>
            <person name="Lin X."/>
            <person name="Liu X."/>
            <person name="Mattei B."/>
            <person name="McIntosh T.C."/>
            <person name="McLeod M.P."/>
            <person name="McPherson D."/>
            <person name="Merkulov G."/>
            <person name="Milshina N.V."/>
            <person name="Mobarry C."/>
            <person name="Morris J."/>
            <person name="Moshrefi A."/>
            <person name="Mount S.M."/>
            <person name="Moy M."/>
            <person name="Murphy B."/>
            <person name="Murphy L."/>
            <person name="Muzny D.M."/>
            <person name="Nelson D.L."/>
            <person name="Nelson D.R."/>
            <person name="Nelson K.A."/>
            <person name="Nixon K."/>
            <person name="Nusskern D.R."/>
            <person name="Pacleb J.M."/>
            <person name="Palazzolo M."/>
            <person name="Pittman G.S."/>
            <person name="Pan S."/>
            <person name="Pollard J."/>
            <person name="Puri V."/>
            <person name="Reese M.G."/>
            <person name="Reinert K."/>
            <person name="Remington K."/>
            <person name="Saunders R.D.C."/>
            <person name="Scheeler F."/>
            <person name="Shen H."/>
            <person name="Shue B.C."/>
            <person name="Siden-Kiamos I."/>
            <person name="Simpson M."/>
            <person name="Skupski M.P."/>
            <person name="Smith T.J."/>
            <person name="Spier E."/>
            <person name="Spradling A.C."/>
            <person name="Stapleton M."/>
            <person name="Strong R."/>
            <person name="Sun E."/>
            <person name="Svirskas R."/>
            <person name="Tector C."/>
            <person name="Turner R."/>
            <person name="Venter E."/>
            <person name="Wang A.H."/>
            <person name="Wang X."/>
            <person name="Wang Z.-Y."/>
            <person name="Wassarman D.A."/>
            <person name="Weinstock G.M."/>
            <person name="Weissenbach J."/>
            <person name="Williams S.M."/>
            <person name="Woodage T."/>
            <person name="Worley K.C."/>
            <person name="Wu D."/>
            <person name="Yang S."/>
            <person name="Yao Q.A."/>
            <person name="Ye J."/>
            <person name="Yeh R.-F."/>
            <person name="Zaveri J.S."/>
            <person name="Zhan M."/>
            <person name="Zhang G."/>
            <person name="Zhao Q."/>
            <person name="Zheng L."/>
            <person name="Zheng X.H."/>
            <person name="Zhong F.N."/>
            <person name="Zhong W."/>
            <person name="Zhou X."/>
            <person name="Zhu S.C."/>
            <person name="Zhu X."/>
            <person name="Smith H.O."/>
            <person name="Gibbs R.A."/>
            <person name="Myers E.W."/>
            <person name="Rubin G.M."/>
            <person name="Venter J.C."/>
        </authorList>
    </citation>
    <scope>NUCLEOTIDE SEQUENCE [LARGE SCALE GENOMIC DNA]</scope>
    <source>
        <strain>Berkeley</strain>
    </source>
</reference>
<reference key="2">
    <citation type="journal article" date="2002" name="Genome Biol.">
        <title>Annotation of the Drosophila melanogaster euchromatic genome: a systematic review.</title>
        <authorList>
            <person name="Misra S."/>
            <person name="Crosby M.A."/>
            <person name="Mungall C.J."/>
            <person name="Matthews B.B."/>
            <person name="Campbell K.S."/>
            <person name="Hradecky P."/>
            <person name="Huang Y."/>
            <person name="Kaminker J.S."/>
            <person name="Millburn G.H."/>
            <person name="Prochnik S.E."/>
            <person name="Smith C.D."/>
            <person name="Tupy J.L."/>
            <person name="Whitfield E.J."/>
            <person name="Bayraktaroglu L."/>
            <person name="Berman B.P."/>
            <person name="Bettencourt B.R."/>
            <person name="Celniker S.E."/>
            <person name="de Grey A.D.N.J."/>
            <person name="Drysdale R.A."/>
            <person name="Harris N.L."/>
            <person name="Richter J."/>
            <person name="Russo S."/>
            <person name="Schroeder A.J."/>
            <person name="Shu S.Q."/>
            <person name="Stapleton M."/>
            <person name="Yamada C."/>
            <person name="Ashburner M."/>
            <person name="Gelbart W.M."/>
            <person name="Rubin G.M."/>
            <person name="Lewis S.E."/>
        </authorList>
    </citation>
    <scope>GENOME REANNOTATION</scope>
    <source>
        <strain>Berkeley</strain>
    </source>
</reference>
<reference key="3">
    <citation type="submission" date="2006-01" db="EMBL/GenBank/DDBJ databases">
        <authorList>
            <person name="Stapleton M."/>
            <person name="Carlson J."/>
            <person name="Chavez C."/>
            <person name="Frise E."/>
            <person name="George R."/>
            <person name="Pacleb J."/>
            <person name="Park S."/>
            <person name="Wan K."/>
            <person name="Yu C."/>
            <person name="Celniker S."/>
        </authorList>
    </citation>
    <scope>NUCLEOTIDE SEQUENCE [LARGE SCALE MRNA]</scope>
</reference>
<reference key="4">
    <citation type="journal article" date="2010" name="Nat. Struct. Mol. Biol.">
        <title>A metazoan ortholog of SpoT hydrolyzes ppGpp and functions in starvation responses.</title>
        <authorList>
            <person name="Sun D."/>
            <person name="Lee G."/>
            <person name="Lee J.H."/>
            <person name="Kim H.-Y."/>
            <person name="Rhee H.W."/>
            <person name="Park S.-Y."/>
            <person name="Kim K.J."/>
            <person name="Kim Y."/>
            <person name="Kim B.Y."/>
            <person name="Hong J.-I."/>
            <person name="Park C."/>
            <person name="Choy H.E."/>
            <person name="Kim J.H."/>
            <person name="Jeon Y.H."/>
            <person name="Chung J."/>
        </authorList>
    </citation>
    <scope>X-RAY CRYSTALLOGRAPHY (2.9 ANGSTROMS)</scope>
    <scope>DISRUPTION PHENOTYPE</scope>
    <scope>FUNCTION</scope>
    <scope>CATALYTIC ACTIVITY</scope>
    <scope>ACTIVE SITE</scope>
    <scope>COFACTOR</scope>
    <scope>MANGANESE-BINDING SITES</scope>
</reference>
<proteinExistence type="evidence at protein level"/>
<organism>
    <name type="scientific">Drosophila melanogaster</name>
    <name type="common">Fruit fly</name>
    <dbReference type="NCBI Taxonomy" id="7227"/>
    <lineage>
        <taxon>Eukaryota</taxon>
        <taxon>Metazoa</taxon>
        <taxon>Ecdysozoa</taxon>
        <taxon>Arthropoda</taxon>
        <taxon>Hexapoda</taxon>
        <taxon>Insecta</taxon>
        <taxon>Pterygota</taxon>
        <taxon>Neoptera</taxon>
        <taxon>Endopterygota</taxon>
        <taxon>Diptera</taxon>
        <taxon>Brachycera</taxon>
        <taxon>Muscomorpha</taxon>
        <taxon>Ephydroidea</taxon>
        <taxon>Drosophilidae</taxon>
        <taxon>Drosophila</taxon>
        <taxon>Sophophora</taxon>
    </lineage>
</organism>
<accession>Q9VAM9</accession>
<protein>
    <recommendedName>
        <fullName>Guanosine-3',5'-bis(diphosphate) 3'-pyrophosphohydrolase MESH1</fullName>
        <ecNumber>3.1.7.2</ecNumber>
    </recommendedName>
    <alternativeName>
        <fullName>Metazoan SpoT homolog 1</fullName>
        <shortName>Mesh1</shortName>
    </alternativeName>
    <alternativeName>
        <fullName>Penta-phosphate guanosine-3'-pyrophosphohydrolase</fullName>
        <shortName>(ppGpp)ase</shortName>
    </alternativeName>
</protein>
<evidence type="ECO:0000255" key="1">
    <source>
        <dbReference type="PROSITE-ProRule" id="PRU01175"/>
    </source>
</evidence>
<evidence type="ECO:0000269" key="2">
    <source>
    </source>
</evidence>
<evidence type="ECO:0000305" key="3"/>
<evidence type="ECO:0000305" key="4">
    <source>
    </source>
</evidence>
<evidence type="ECO:0007829" key="5">
    <source>
        <dbReference type="PDB" id="3NQW"/>
    </source>
</evidence>
<name>MESH1_DROME</name>
<gene>
    <name type="primary">Mesh1</name>
    <name type="ORF">CG11900</name>
</gene>
<keyword id="KW-0002">3D-structure</keyword>
<keyword id="KW-0378">Hydrolase</keyword>
<keyword id="KW-0464">Manganese</keyword>
<keyword id="KW-0479">Metal-binding</keyword>
<keyword id="KW-1185">Reference proteome</keyword>
<sequence length="179" mass="20569">MATYPSAKFMECLQYAAFKHRQQRRKDPQETPYVNHVINVSTILSVEACITDEGVLMAALLHDVVEDTDASFEDVEKLFGPDVCGLVREVTDDKSLEKQERKRLQIENAAKSSCRAKLIKLADKLDNLRDLQVNTPTGWTQERRDQYFVWAKKVVDNLRGTNANLELKLDEIFRQRGLL</sequence>
<feature type="chain" id="PRO_0000402127" description="Guanosine-3',5'-bis(diphosphate) 3'-pyrophosphohydrolase MESH1">
    <location>
        <begin position="1"/>
        <end position="179"/>
    </location>
</feature>
<feature type="domain" description="HD" evidence="1">
    <location>
        <begin position="33"/>
        <end position="128"/>
    </location>
</feature>
<feature type="active site" description="Nucleophile" evidence="4">
    <location>
        <position position="66"/>
    </location>
</feature>
<feature type="active site" description="Nucleophile" evidence="4">
    <location>
        <position position="67"/>
    </location>
</feature>
<feature type="binding site">
    <location>
        <position position="36"/>
    </location>
    <ligand>
        <name>Mn(2+)</name>
        <dbReference type="ChEBI" id="CHEBI:29035"/>
    </ligand>
</feature>
<feature type="binding site">
    <location>
        <position position="62"/>
    </location>
    <ligand>
        <name>Mn(2+)</name>
        <dbReference type="ChEBI" id="CHEBI:29035"/>
    </ligand>
</feature>
<feature type="binding site">
    <location>
        <position position="63"/>
    </location>
    <ligand>
        <name>Mn(2+)</name>
        <dbReference type="ChEBI" id="CHEBI:29035"/>
    </ligand>
</feature>
<feature type="binding site">
    <location>
        <position position="123"/>
    </location>
    <ligand>
        <name>Mn(2+)</name>
        <dbReference type="ChEBI" id="CHEBI:29035"/>
    </ligand>
</feature>
<feature type="helix" evidence="5">
    <location>
        <begin position="7"/>
        <end position="19"/>
    </location>
</feature>
<feature type="strand" evidence="5">
    <location>
        <begin position="26"/>
        <end position="29"/>
    </location>
</feature>
<feature type="helix" evidence="5">
    <location>
        <begin position="34"/>
        <end position="45"/>
    </location>
</feature>
<feature type="turn" evidence="5">
    <location>
        <begin position="46"/>
        <end position="48"/>
    </location>
</feature>
<feature type="helix" evidence="5">
    <location>
        <begin position="53"/>
        <end position="60"/>
    </location>
</feature>
<feature type="turn" evidence="5">
    <location>
        <begin position="61"/>
        <end position="63"/>
    </location>
</feature>
<feature type="helix" evidence="5">
    <location>
        <begin position="64"/>
        <end position="67"/>
    </location>
</feature>
<feature type="helix" evidence="5">
    <location>
        <begin position="72"/>
        <end position="79"/>
    </location>
</feature>
<feature type="helix" evidence="5">
    <location>
        <begin position="81"/>
        <end position="89"/>
    </location>
</feature>
<feature type="helix" evidence="5">
    <location>
        <begin position="98"/>
        <end position="107"/>
    </location>
</feature>
<feature type="helix" evidence="5">
    <location>
        <begin position="114"/>
        <end position="133"/>
    </location>
</feature>
<feature type="helix" evidence="5">
    <location>
        <begin position="141"/>
        <end position="158"/>
    </location>
</feature>
<feature type="helix" evidence="5">
    <location>
        <begin position="163"/>
        <end position="176"/>
    </location>
</feature>
<dbReference type="EC" id="3.1.7.2"/>
<dbReference type="EMBL" id="AE014297">
    <property type="protein sequence ID" value="AAF56875.1"/>
    <property type="molecule type" value="Genomic_DNA"/>
</dbReference>
<dbReference type="EMBL" id="BT024375">
    <property type="protein sequence ID" value="ABC86437.1"/>
    <property type="molecule type" value="mRNA"/>
</dbReference>
<dbReference type="RefSeq" id="NP_651682.1">
    <property type="nucleotide sequence ID" value="NM_143425.2"/>
</dbReference>
<dbReference type="PDB" id="3NQW">
    <property type="method" value="X-ray"/>
    <property type="resolution" value="2.90 A"/>
    <property type="chains" value="A/B=1-179"/>
</dbReference>
<dbReference type="PDBsum" id="3NQW"/>
<dbReference type="SMR" id="Q9VAM9"/>
<dbReference type="BioGRID" id="68325">
    <property type="interactions" value="1"/>
</dbReference>
<dbReference type="FunCoup" id="Q9VAM9">
    <property type="interactions" value="409"/>
</dbReference>
<dbReference type="IntAct" id="Q9VAM9">
    <property type="interactions" value="1"/>
</dbReference>
<dbReference type="STRING" id="7227.FBpp0084776"/>
<dbReference type="PaxDb" id="7227-FBpp0084776"/>
<dbReference type="DNASU" id="43456"/>
<dbReference type="EnsemblMetazoa" id="FBtr0085407">
    <property type="protein sequence ID" value="FBpp0084776"/>
    <property type="gene ID" value="FBgn0039650"/>
</dbReference>
<dbReference type="GeneID" id="43456"/>
<dbReference type="KEGG" id="dme:Dmel_CG11900"/>
<dbReference type="UCSC" id="CG11900-RA">
    <property type="organism name" value="d. melanogaster"/>
</dbReference>
<dbReference type="AGR" id="FB:FBgn0039650"/>
<dbReference type="CTD" id="43456"/>
<dbReference type="FlyBase" id="FBgn0039650">
    <property type="gene designation" value="Mesh1"/>
</dbReference>
<dbReference type="VEuPathDB" id="VectorBase:FBgn0039650"/>
<dbReference type="eggNOG" id="KOG1157">
    <property type="taxonomic scope" value="Eukaryota"/>
</dbReference>
<dbReference type="GeneTree" id="ENSGT00390000011608"/>
<dbReference type="HOGENOM" id="CLU_084517_1_0_1"/>
<dbReference type="InParanoid" id="Q9VAM9"/>
<dbReference type="OMA" id="PPWRERK"/>
<dbReference type="OrthoDB" id="430679at2759"/>
<dbReference type="PhylomeDB" id="Q9VAM9"/>
<dbReference type="BioGRID-ORCS" id="43456">
    <property type="hits" value="0 hits in 1 CRISPR screen"/>
</dbReference>
<dbReference type="EvolutionaryTrace" id="Q9VAM9"/>
<dbReference type="GenomeRNAi" id="43456"/>
<dbReference type="PRO" id="PR:Q9VAM9"/>
<dbReference type="Proteomes" id="UP000000803">
    <property type="component" value="Chromosome 3R"/>
</dbReference>
<dbReference type="Bgee" id="FBgn0039650">
    <property type="expression patterns" value="Expressed in adult anterior midgut class I enteroendocrine cell in adult midgut (Drosophila) and 31 other cell types or tissues"/>
</dbReference>
<dbReference type="GO" id="GO:0008893">
    <property type="term" value="F:guanosine-3',5'-bis(diphosphate) 3'-diphosphatase activity"/>
    <property type="evidence" value="ECO:0000314"/>
    <property type="project" value="FlyBase"/>
</dbReference>
<dbReference type="GO" id="GO:0046872">
    <property type="term" value="F:metal ion binding"/>
    <property type="evidence" value="ECO:0007669"/>
    <property type="project" value="UniProtKB-KW"/>
</dbReference>
<dbReference type="GO" id="GO:0015971">
    <property type="term" value="P:guanosine tetraphosphate catabolic process"/>
    <property type="evidence" value="ECO:0000314"/>
    <property type="project" value="FlyBase"/>
</dbReference>
<dbReference type="GO" id="GO:0042594">
    <property type="term" value="P:response to starvation"/>
    <property type="evidence" value="ECO:0000315"/>
    <property type="project" value="FlyBase"/>
</dbReference>
<dbReference type="CDD" id="cd00077">
    <property type="entry name" value="HDc"/>
    <property type="match status" value="1"/>
</dbReference>
<dbReference type="FunFam" id="1.10.3210.10:FF:000012">
    <property type="entry name" value="HD domain containing 3"/>
    <property type="match status" value="1"/>
</dbReference>
<dbReference type="Gene3D" id="1.10.3210.10">
    <property type="entry name" value="Hypothetical protein af1432"/>
    <property type="match status" value="1"/>
</dbReference>
<dbReference type="InterPro" id="IPR003607">
    <property type="entry name" value="HD/PDEase_dom"/>
</dbReference>
<dbReference type="InterPro" id="IPR006674">
    <property type="entry name" value="HD_domain"/>
</dbReference>
<dbReference type="InterPro" id="IPR052194">
    <property type="entry name" value="MESH1"/>
</dbReference>
<dbReference type="PANTHER" id="PTHR46246">
    <property type="entry name" value="GUANOSINE-3',5'-BIS(DIPHOSPHATE) 3'-PYROPHOSPHOHYDROLASE MESH1"/>
    <property type="match status" value="1"/>
</dbReference>
<dbReference type="PANTHER" id="PTHR46246:SF1">
    <property type="entry name" value="GUANOSINE-3',5'-BIS(DIPHOSPHATE) 3'-PYROPHOSPHOHYDROLASE MESH1"/>
    <property type="match status" value="1"/>
</dbReference>
<dbReference type="Pfam" id="PF13328">
    <property type="entry name" value="HD_4"/>
    <property type="match status" value="1"/>
</dbReference>
<dbReference type="SMART" id="SM00471">
    <property type="entry name" value="HDc"/>
    <property type="match status" value="1"/>
</dbReference>
<dbReference type="SUPFAM" id="SSF109604">
    <property type="entry name" value="HD-domain/PDEase-like"/>
    <property type="match status" value="1"/>
</dbReference>
<dbReference type="PROSITE" id="PS51831">
    <property type="entry name" value="HD"/>
    <property type="match status" value="1"/>
</dbReference>